<keyword id="KW-0963">Cytoplasm</keyword>
<keyword id="KW-0227">DNA damage</keyword>
<keyword id="KW-0234">DNA repair</keyword>
<keyword id="KW-0235">DNA replication</keyword>
<keyword id="KW-0238">DNA-binding</keyword>
<keyword id="KW-0239">DNA-directed DNA polymerase</keyword>
<keyword id="KW-0460">Magnesium</keyword>
<keyword id="KW-0479">Metal-binding</keyword>
<keyword id="KW-0515">Mutator protein</keyword>
<keyword id="KW-0548">Nucleotidyltransferase</keyword>
<keyword id="KW-0808">Transferase</keyword>
<protein>
    <recommendedName>
        <fullName evidence="1">DNA polymerase IV</fullName>
        <shortName evidence="1">Pol IV</shortName>
        <ecNumber evidence="1">2.7.7.7</ecNumber>
    </recommendedName>
</protein>
<feature type="chain" id="PRO_1000084959" description="DNA polymerase IV">
    <location>
        <begin position="1"/>
        <end position="364"/>
    </location>
</feature>
<feature type="domain" description="UmuC" evidence="1">
    <location>
        <begin position="14"/>
        <end position="198"/>
    </location>
</feature>
<feature type="active site" evidence="1">
    <location>
        <position position="117"/>
    </location>
</feature>
<feature type="binding site" evidence="1">
    <location>
        <position position="18"/>
    </location>
    <ligand>
        <name>Mg(2+)</name>
        <dbReference type="ChEBI" id="CHEBI:18420"/>
    </ligand>
</feature>
<feature type="binding site" evidence="1">
    <location>
        <position position="116"/>
    </location>
    <ligand>
        <name>Mg(2+)</name>
        <dbReference type="ChEBI" id="CHEBI:18420"/>
    </ligand>
</feature>
<feature type="site" description="Substrate discrimination" evidence="1">
    <location>
        <position position="23"/>
    </location>
</feature>
<comment type="function">
    <text evidence="1">Poorly processive, error-prone DNA polymerase involved in untargeted mutagenesis. Copies undamaged DNA at stalled replication forks, which arise in vivo from mismatched or misaligned primer ends. These misaligned primers can be extended by PolIV. Exhibits no 3'-5' exonuclease (proofreading) activity. May be involved in translesional synthesis, in conjunction with the beta clamp from PolIII.</text>
</comment>
<comment type="catalytic activity">
    <reaction evidence="1">
        <text>DNA(n) + a 2'-deoxyribonucleoside 5'-triphosphate = DNA(n+1) + diphosphate</text>
        <dbReference type="Rhea" id="RHEA:22508"/>
        <dbReference type="Rhea" id="RHEA-COMP:17339"/>
        <dbReference type="Rhea" id="RHEA-COMP:17340"/>
        <dbReference type="ChEBI" id="CHEBI:33019"/>
        <dbReference type="ChEBI" id="CHEBI:61560"/>
        <dbReference type="ChEBI" id="CHEBI:173112"/>
        <dbReference type="EC" id="2.7.7.7"/>
    </reaction>
</comment>
<comment type="cofactor">
    <cofactor evidence="1">
        <name>Mg(2+)</name>
        <dbReference type="ChEBI" id="CHEBI:18420"/>
    </cofactor>
    <text evidence="1">Binds 2 magnesium ions per subunit.</text>
</comment>
<comment type="subunit">
    <text evidence="1">Monomer.</text>
</comment>
<comment type="subcellular location">
    <subcellularLocation>
        <location evidence="1">Cytoplasm</location>
    </subcellularLocation>
</comment>
<comment type="similarity">
    <text evidence="1">Belongs to the DNA polymerase type-Y family.</text>
</comment>
<dbReference type="EC" id="2.7.7.7" evidence="1"/>
<dbReference type="EMBL" id="CP000056">
    <property type="protein sequence ID" value="AAX72666.1"/>
    <property type="molecule type" value="Genomic_DNA"/>
</dbReference>
<dbReference type="RefSeq" id="WP_011285134.1">
    <property type="nucleotide sequence ID" value="NC_007296.2"/>
</dbReference>
<dbReference type="SMR" id="Q48RJ4"/>
<dbReference type="KEGG" id="spb:M28_Spy1556"/>
<dbReference type="HOGENOM" id="CLU_012348_1_2_9"/>
<dbReference type="GO" id="GO:0005829">
    <property type="term" value="C:cytosol"/>
    <property type="evidence" value="ECO:0007669"/>
    <property type="project" value="TreeGrafter"/>
</dbReference>
<dbReference type="GO" id="GO:0003684">
    <property type="term" value="F:damaged DNA binding"/>
    <property type="evidence" value="ECO:0007669"/>
    <property type="project" value="InterPro"/>
</dbReference>
<dbReference type="GO" id="GO:0003887">
    <property type="term" value="F:DNA-directed DNA polymerase activity"/>
    <property type="evidence" value="ECO:0007669"/>
    <property type="project" value="UniProtKB-UniRule"/>
</dbReference>
<dbReference type="GO" id="GO:0000287">
    <property type="term" value="F:magnesium ion binding"/>
    <property type="evidence" value="ECO:0007669"/>
    <property type="project" value="UniProtKB-UniRule"/>
</dbReference>
<dbReference type="GO" id="GO:0006261">
    <property type="term" value="P:DNA-templated DNA replication"/>
    <property type="evidence" value="ECO:0007669"/>
    <property type="project" value="UniProtKB-UniRule"/>
</dbReference>
<dbReference type="GO" id="GO:0042276">
    <property type="term" value="P:error-prone translesion synthesis"/>
    <property type="evidence" value="ECO:0007669"/>
    <property type="project" value="TreeGrafter"/>
</dbReference>
<dbReference type="GO" id="GO:0009432">
    <property type="term" value="P:SOS response"/>
    <property type="evidence" value="ECO:0007669"/>
    <property type="project" value="TreeGrafter"/>
</dbReference>
<dbReference type="CDD" id="cd03586">
    <property type="entry name" value="PolY_Pol_IV_kappa"/>
    <property type="match status" value="1"/>
</dbReference>
<dbReference type="FunFam" id="3.30.1490.100:FF:000004">
    <property type="entry name" value="DNA polymerase IV"/>
    <property type="match status" value="1"/>
</dbReference>
<dbReference type="FunFam" id="3.40.1170.60:FF:000001">
    <property type="entry name" value="DNA polymerase IV"/>
    <property type="match status" value="1"/>
</dbReference>
<dbReference type="Gene3D" id="3.30.70.270">
    <property type="match status" value="1"/>
</dbReference>
<dbReference type="Gene3D" id="3.40.1170.60">
    <property type="match status" value="1"/>
</dbReference>
<dbReference type="Gene3D" id="1.10.150.20">
    <property type="entry name" value="5' to 3' exonuclease, C-terminal subdomain"/>
    <property type="match status" value="1"/>
</dbReference>
<dbReference type="Gene3D" id="3.30.1490.100">
    <property type="entry name" value="DNA polymerase, Y-family, little finger domain"/>
    <property type="match status" value="1"/>
</dbReference>
<dbReference type="HAMAP" id="MF_01113">
    <property type="entry name" value="DNApol_IV"/>
    <property type="match status" value="1"/>
</dbReference>
<dbReference type="InterPro" id="IPR043502">
    <property type="entry name" value="DNA/RNA_pol_sf"/>
</dbReference>
<dbReference type="InterPro" id="IPR036775">
    <property type="entry name" value="DNA_pol_Y-fam_lit_finger_sf"/>
</dbReference>
<dbReference type="InterPro" id="IPR017961">
    <property type="entry name" value="DNA_pol_Y-fam_little_finger"/>
</dbReference>
<dbReference type="InterPro" id="IPR050116">
    <property type="entry name" value="DNA_polymerase-Y"/>
</dbReference>
<dbReference type="InterPro" id="IPR022880">
    <property type="entry name" value="DNApol_IV"/>
</dbReference>
<dbReference type="InterPro" id="IPR024728">
    <property type="entry name" value="PolY_HhH_motif"/>
</dbReference>
<dbReference type="InterPro" id="IPR043128">
    <property type="entry name" value="Rev_trsase/Diguanyl_cyclase"/>
</dbReference>
<dbReference type="InterPro" id="IPR001126">
    <property type="entry name" value="UmuC"/>
</dbReference>
<dbReference type="NCBIfam" id="NF002677">
    <property type="entry name" value="PRK02406.1"/>
    <property type="match status" value="1"/>
</dbReference>
<dbReference type="NCBIfam" id="NF010731">
    <property type="entry name" value="PRK14133.1"/>
    <property type="match status" value="1"/>
</dbReference>
<dbReference type="PANTHER" id="PTHR11076:SF33">
    <property type="entry name" value="DNA POLYMERASE KAPPA"/>
    <property type="match status" value="1"/>
</dbReference>
<dbReference type="PANTHER" id="PTHR11076">
    <property type="entry name" value="DNA REPAIR POLYMERASE UMUC / TRANSFERASE FAMILY MEMBER"/>
    <property type="match status" value="1"/>
</dbReference>
<dbReference type="Pfam" id="PF00817">
    <property type="entry name" value="IMS"/>
    <property type="match status" value="1"/>
</dbReference>
<dbReference type="Pfam" id="PF11799">
    <property type="entry name" value="IMS_C"/>
    <property type="match status" value="1"/>
</dbReference>
<dbReference type="Pfam" id="PF11798">
    <property type="entry name" value="IMS_HHH"/>
    <property type="match status" value="1"/>
</dbReference>
<dbReference type="SUPFAM" id="SSF56672">
    <property type="entry name" value="DNA/RNA polymerases"/>
    <property type="match status" value="1"/>
</dbReference>
<dbReference type="SUPFAM" id="SSF100879">
    <property type="entry name" value="Lesion bypass DNA polymerase (Y-family), little finger domain"/>
    <property type="match status" value="1"/>
</dbReference>
<dbReference type="PROSITE" id="PS50173">
    <property type="entry name" value="UMUC"/>
    <property type="match status" value="1"/>
</dbReference>
<evidence type="ECO:0000255" key="1">
    <source>
        <dbReference type="HAMAP-Rule" id="MF_01113"/>
    </source>
</evidence>
<organism>
    <name type="scientific">Streptococcus pyogenes serotype M28 (strain MGAS6180)</name>
    <dbReference type="NCBI Taxonomy" id="319701"/>
    <lineage>
        <taxon>Bacteria</taxon>
        <taxon>Bacillati</taxon>
        <taxon>Bacillota</taxon>
        <taxon>Bacilli</taxon>
        <taxon>Lactobacillales</taxon>
        <taxon>Streptococcaceae</taxon>
        <taxon>Streptococcus</taxon>
    </lineage>
</organism>
<sequence length="364" mass="40774">MLIFPLINDTSRKIIHIDMDAFFAAVEERDNPALKGKPVVIGKDPRETGGRGVVSTCNYEARKYGIHSAMSSKEAYERCPKAIFISGNYEKYRTVGDQIRRIFKRYTDVVEPMSIDEAYLDVTNNKLGIKSAVKIAKLIQHDIWKEVGLTCSAGVSYNKFLAKLASDFEKPHGLTLVLKEDALCFLAKLPIEKFHGVGKKSVEKLHDMGIYTGQDLLAVPEMTLIDHFGRFGFDLYRKARGISNSPVKSDRIRKSIGSERTYAKLLYQETDIKAEISKNAKRVAALLQDHKKLGKTIVLKVRYADFTTLTKRVTLPELTRNAAQIEQVAGDIFDSLSENPAGIRLLGITMTNLEDKVADISLDL</sequence>
<proteinExistence type="inferred from homology"/>
<name>DPO4_STRPM</name>
<gene>
    <name evidence="1" type="primary">dinB</name>
    <name type="ordered locus">M28_Spy1556</name>
</gene>
<reference key="1">
    <citation type="journal article" date="2005" name="J. Infect. Dis.">
        <title>Genome sequence of a serotype M28 strain of group A Streptococcus: potential new insights into puerperal sepsis and bacterial disease specificity.</title>
        <authorList>
            <person name="Green N.M."/>
            <person name="Zhang S."/>
            <person name="Porcella S.F."/>
            <person name="Nagiec M.J."/>
            <person name="Barbian K.D."/>
            <person name="Beres S.B."/>
            <person name="Lefebvre R.B."/>
            <person name="Musser J.M."/>
        </authorList>
    </citation>
    <scope>NUCLEOTIDE SEQUENCE [LARGE SCALE GENOMIC DNA]</scope>
    <source>
        <strain>MGAS6180</strain>
    </source>
</reference>
<accession>Q48RJ4</accession>